<reference key="1">
    <citation type="submission" date="1997-06" db="EMBL/GenBank/DDBJ databases">
        <authorList>
            <person name="Freymann D.M."/>
            <person name="Keenan R.J."/>
            <person name="Stroud R.M."/>
            <person name="Walter P."/>
        </authorList>
    </citation>
    <scope>NUCLEOTIDE SEQUENCE [GENOMIC DNA]</scope>
</reference>
<reference key="2">
    <citation type="journal article" date="1997" name="Nature">
        <title>Structure of the conserved GTPase domain of the signal recognition particle.</title>
        <authorList>
            <person name="Freymann D.M."/>
            <person name="Keenan R.J."/>
            <person name="Stroud R.M."/>
            <person name="Walter P."/>
        </authorList>
    </citation>
    <scope>X-RAY CRYSTALLOGRAPHY (2.05 ANGSTROMS) OF 1-295</scope>
    <scope>DOMAIN</scope>
</reference>
<reference key="3">
    <citation type="journal article" date="1998" name="Cell">
        <title>Crystal structure of the signal sequence binding subunit of the signal recognition particle.</title>
        <authorList>
            <person name="Keenan R.J."/>
            <person name="Freymann D.M."/>
            <person name="Walter P."/>
            <person name="Stroud R.M."/>
        </authorList>
    </citation>
    <scope>X-RAY CRYSTALLOGRAPHY (3.2 ANGSTROMS)</scope>
</reference>
<reference key="4">
    <citation type="journal article" date="1999" name="Nat. Struct. Biol.">
        <title>Functional changes in the structure of the SRP GTPase on binding GDP and Mg2+GDP.</title>
        <authorList>
            <person name="Freymann D.M."/>
            <person name="Keenan R.J."/>
            <person name="Stroud R.M."/>
            <person name="Walter P."/>
        </authorList>
    </citation>
    <scope>X-RAY CRYSTALLOGRAPHY (2.03 ANGSTROMS) OF 1-295</scope>
    <scope>DOMAIN</scope>
</reference>
<reference key="5">
    <citation type="journal article" date="2003" name="Acta Crystallogr. D">
        <title>Crystallization of the GMPPCP complex of the NG domains of Thermus aquaticus Ffh and FtsY.</title>
        <authorList>
            <person name="Shepotinovskaya I.V."/>
            <person name="Focia P.J."/>
            <person name="Freymann D.M."/>
        </authorList>
    </citation>
    <scope>CRYSTALLIZATION</scope>
    <scope>X-RAY CRYSTALLOGRAPHY (2.0 ANGSTROMS)</scope>
    <scope>DOMAIN</scope>
</reference>
<protein>
    <recommendedName>
        <fullName evidence="1">Signal recognition particle protein</fullName>
        <ecNumber evidence="1">3.6.5.4</ecNumber>
    </recommendedName>
    <alternativeName>
        <fullName evidence="1">Fifty-four homolog</fullName>
    </alternativeName>
</protein>
<sequence>MFQQLSARLQEAIGRLRGRGRITEEDLKATLREIRRALMDADVNLEVARDFVERVREEALGKQVLESLTPAEVILATVYEALKEALGGEARLPVLKDRNLWFLVGLQGSGKTTTAAKLALYYKGKGRRPLLVAADTQRPAAREQLRLLGEKVGVPVLEVMDGESPESIRRRVEEKARLEARDLILVDTAGRLQIDEPLMGELARLKEVLGPDEVLLVLDAMTGQEALSVARAFDEKVGVTGLVLTKLDGDARGGAALSARHVTGKPIYFAGVSEKPEGLEPFYPERLAGRILGMGDVASLAEKVRAAGLEAEAPKSAKELSLEDFLKQMQNLKRLGPFSEILGLLPGVPQGLKVDEKAIKRLEAIVLSMTPEERKDPRILNGSRRKRIAKGSGTSVQEVNRFIKAFEEMKALMKSLEKKKGRGLMGMFRR</sequence>
<proteinExistence type="evidence at protein level"/>
<organism>
    <name type="scientific">Thermus aquaticus</name>
    <dbReference type="NCBI Taxonomy" id="271"/>
    <lineage>
        <taxon>Bacteria</taxon>
        <taxon>Thermotogati</taxon>
        <taxon>Deinococcota</taxon>
        <taxon>Deinococci</taxon>
        <taxon>Thermales</taxon>
        <taxon>Thermaceae</taxon>
        <taxon>Thermus</taxon>
    </lineage>
</organism>
<dbReference type="EC" id="3.6.5.4" evidence="1"/>
<dbReference type="EMBL" id="U82109">
    <property type="protein sequence ID" value="AAB58502.1"/>
    <property type="molecule type" value="Genomic_DNA"/>
</dbReference>
<dbReference type="RefSeq" id="WP_003045728.1">
    <property type="nucleotide sequence ID" value="NZ_LHCI01000106.1"/>
</dbReference>
<dbReference type="PDB" id="1FFH">
    <property type="method" value="X-ray"/>
    <property type="resolution" value="2.05 A"/>
    <property type="chains" value="A=2-295"/>
</dbReference>
<dbReference type="PDB" id="1JPJ">
    <property type="method" value="X-ray"/>
    <property type="resolution" value="2.30 A"/>
    <property type="chains" value="A=1-296"/>
</dbReference>
<dbReference type="PDB" id="1JPN">
    <property type="method" value="X-ray"/>
    <property type="resolution" value="1.90 A"/>
    <property type="chains" value="A/B=1-296"/>
</dbReference>
<dbReference type="PDB" id="1LS1">
    <property type="method" value="X-ray"/>
    <property type="resolution" value="1.10 A"/>
    <property type="chains" value="A=1-295"/>
</dbReference>
<dbReference type="PDB" id="1NG1">
    <property type="method" value="X-ray"/>
    <property type="resolution" value="2.03 A"/>
    <property type="chains" value="A=1-294"/>
</dbReference>
<dbReference type="PDB" id="1O87">
    <property type="method" value="X-ray"/>
    <property type="resolution" value="2.10 A"/>
    <property type="chains" value="A/B=2-297"/>
</dbReference>
<dbReference type="PDB" id="1OKK">
    <property type="method" value="X-ray"/>
    <property type="resolution" value="2.05 A"/>
    <property type="chains" value="A=1-294"/>
</dbReference>
<dbReference type="PDB" id="1RJ9">
    <property type="method" value="X-ray"/>
    <property type="resolution" value="1.90 A"/>
    <property type="chains" value="B=1-300"/>
</dbReference>
<dbReference type="PDB" id="1RY1">
    <property type="method" value="EM"/>
    <property type="resolution" value="12.00 A"/>
    <property type="chains" value="U=1-296"/>
</dbReference>
<dbReference type="PDB" id="2C03">
    <property type="method" value="X-ray"/>
    <property type="resolution" value="1.24 A"/>
    <property type="chains" value="A/B=2-297"/>
</dbReference>
<dbReference type="PDB" id="2C04">
    <property type="method" value="X-ray"/>
    <property type="resolution" value="1.15 A"/>
    <property type="chains" value="A/B=2-297"/>
</dbReference>
<dbReference type="PDB" id="2CNW">
    <property type="method" value="X-ray"/>
    <property type="resolution" value="2.39 A"/>
    <property type="chains" value="A/B/C=2-294"/>
</dbReference>
<dbReference type="PDB" id="2FFH">
    <property type="method" value="X-ray"/>
    <property type="resolution" value="3.20 A"/>
    <property type="chains" value="A/B/C=1-425"/>
</dbReference>
<dbReference type="PDB" id="2IY3">
    <property type="method" value="EM"/>
    <property type="resolution" value="16.00 A"/>
    <property type="chains" value="A=2-296"/>
</dbReference>
<dbReference type="PDB" id="2J45">
    <property type="method" value="X-ray"/>
    <property type="resolution" value="1.14 A"/>
    <property type="chains" value="A/B=2-297"/>
</dbReference>
<dbReference type="PDB" id="2J46">
    <property type="method" value="X-ray"/>
    <property type="resolution" value="1.14 A"/>
    <property type="chains" value="A/B=2-297"/>
</dbReference>
<dbReference type="PDB" id="2J7P">
    <property type="method" value="X-ray"/>
    <property type="resolution" value="1.97 A"/>
    <property type="chains" value="A/B=2-294"/>
</dbReference>
<dbReference type="PDB" id="2NG1">
    <property type="method" value="X-ray"/>
    <property type="resolution" value="2.02 A"/>
    <property type="chains" value="A=2-294"/>
</dbReference>
<dbReference type="PDB" id="2XKV">
    <property type="method" value="EM"/>
    <property type="resolution" value="13.50 A"/>
    <property type="chains" value="A=1-294"/>
</dbReference>
<dbReference type="PDB" id="3NG1">
    <property type="method" value="X-ray"/>
    <property type="resolution" value="2.30 A"/>
    <property type="chains" value="A/B=1-294"/>
</dbReference>
<dbReference type="PDB" id="3ZN8">
    <property type="method" value="EM"/>
    <property type="resolution" value="12.00 A"/>
    <property type="chains" value="A=2-295"/>
</dbReference>
<dbReference type="PDBsum" id="1FFH"/>
<dbReference type="PDBsum" id="1JPJ"/>
<dbReference type="PDBsum" id="1JPN"/>
<dbReference type="PDBsum" id="1LS1"/>
<dbReference type="PDBsum" id="1NG1"/>
<dbReference type="PDBsum" id="1O87"/>
<dbReference type="PDBsum" id="1OKK"/>
<dbReference type="PDBsum" id="1RJ9"/>
<dbReference type="PDBsum" id="1RY1"/>
<dbReference type="PDBsum" id="2C03"/>
<dbReference type="PDBsum" id="2C04"/>
<dbReference type="PDBsum" id="2CNW"/>
<dbReference type="PDBsum" id="2FFH"/>
<dbReference type="PDBsum" id="2IY3"/>
<dbReference type="PDBsum" id="2J45"/>
<dbReference type="PDBsum" id="2J46"/>
<dbReference type="PDBsum" id="2J7P"/>
<dbReference type="PDBsum" id="2NG1"/>
<dbReference type="PDBsum" id="2XKV"/>
<dbReference type="PDBsum" id="3NG1"/>
<dbReference type="PDBsum" id="3ZN8"/>
<dbReference type="EMDB" id="EMD-1762"/>
<dbReference type="EMDB" id="EMD-2316"/>
<dbReference type="SMR" id="O07347"/>
<dbReference type="IntAct" id="O07347">
    <property type="interactions" value="1"/>
</dbReference>
<dbReference type="DrugBank" id="DB01942">
    <property type="generic name" value="Formic acid"/>
</dbReference>
<dbReference type="DrugBank" id="DB04315">
    <property type="generic name" value="Guanosine-5'-Diphosphate"/>
</dbReference>
<dbReference type="EvolutionaryTrace" id="O07347"/>
<dbReference type="GO" id="GO:0048500">
    <property type="term" value="C:signal recognition particle"/>
    <property type="evidence" value="ECO:0007669"/>
    <property type="project" value="UniProtKB-UniRule"/>
</dbReference>
<dbReference type="GO" id="GO:0008312">
    <property type="term" value="F:7S RNA binding"/>
    <property type="evidence" value="ECO:0007669"/>
    <property type="project" value="InterPro"/>
</dbReference>
<dbReference type="GO" id="GO:0016887">
    <property type="term" value="F:ATP hydrolysis activity"/>
    <property type="evidence" value="ECO:0007669"/>
    <property type="project" value="InterPro"/>
</dbReference>
<dbReference type="GO" id="GO:0005525">
    <property type="term" value="F:GTP binding"/>
    <property type="evidence" value="ECO:0007669"/>
    <property type="project" value="UniProtKB-UniRule"/>
</dbReference>
<dbReference type="GO" id="GO:0003924">
    <property type="term" value="F:GTPase activity"/>
    <property type="evidence" value="ECO:0007669"/>
    <property type="project" value="UniProtKB-UniRule"/>
</dbReference>
<dbReference type="GO" id="GO:0006614">
    <property type="term" value="P:SRP-dependent cotranslational protein targeting to membrane"/>
    <property type="evidence" value="ECO:0007669"/>
    <property type="project" value="InterPro"/>
</dbReference>
<dbReference type="CDD" id="cd18539">
    <property type="entry name" value="SRP_G"/>
    <property type="match status" value="1"/>
</dbReference>
<dbReference type="Gene3D" id="3.40.50.300">
    <property type="entry name" value="P-loop containing nucleotide triphosphate hydrolases"/>
    <property type="match status" value="1"/>
</dbReference>
<dbReference type="Gene3D" id="1.20.120.140">
    <property type="entry name" value="Signal recognition particle SRP54, nucleotide-binding domain"/>
    <property type="match status" value="1"/>
</dbReference>
<dbReference type="Gene3D" id="1.10.260.30">
    <property type="entry name" value="Signal recognition particle, SRP54 subunit, M-domain"/>
    <property type="match status" value="1"/>
</dbReference>
<dbReference type="HAMAP" id="MF_00306">
    <property type="entry name" value="SRP54"/>
    <property type="match status" value="1"/>
</dbReference>
<dbReference type="InterPro" id="IPR003593">
    <property type="entry name" value="AAA+_ATPase"/>
</dbReference>
<dbReference type="InterPro" id="IPR027417">
    <property type="entry name" value="P-loop_NTPase"/>
</dbReference>
<dbReference type="InterPro" id="IPR036891">
    <property type="entry name" value="Signal_recog_part_SRP54_M_sf"/>
</dbReference>
<dbReference type="InterPro" id="IPR013822">
    <property type="entry name" value="Signal_recog_particl_SRP54_hlx"/>
</dbReference>
<dbReference type="InterPro" id="IPR004125">
    <property type="entry name" value="Signal_recog_particle_SRP54_M"/>
</dbReference>
<dbReference type="InterPro" id="IPR004780">
    <property type="entry name" value="SRP"/>
</dbReference>
<dbReference type="InterPro" id="IPR036225">
    <property type="entry name" value="SRP/SRP_N"/>
</dbReference>
<dbReference type="InterPro" id="IPR022941">
    <property type="entry name" value="SRP54"/>
</dbReference>
<dbReference type="InterPro" id="IPR000897">
    <property type="entry name" value="SRP54_GTPase_dom"/>
</dbReference>
<dbReference type="InterPro" id="IPR042101">
    <property type="entry name" value="SRP54_N_sf"/>
</dbReference>
<dbReference type="NCBIfam" id="TIGR00959">
    <property type="entry name" value="ffh"/>
    <property type="match status" value="1"/>
</dbReference>
<dbReference type="PANTHER" id="PTHR11564">
    <property type="entry name" value="SIGNAL RECOGNITION PARTICLE 54K PROTEIN SRP54"/>
    <property type="match status" value="1"/>
</dbReference>
<dbReference type="PANTHER" id="PTHR11564:SF5">
    <property type="entry name" value="SIGNAL RECOGNITION PARTICLE SUBUNIT SRP54"/>
    <property type="match status" value="1"/>
</dbReference>
<dbReference type="Pfam" id="PF00448">
    <property type="entry name" value="SRP54"/>
    <property type="match status" value="1"/>
</dbReference>
<dbReference type="Pfam" id="PF02881">
    <property type="entry name" value="SRP54_N"/>
    <property type="match status" value="1"/>
</dbReference>
<dbReference type="Pfam" id="PF02978">
    <property type="entry name" value="SRP_SPB"/>
    <property type="match status" value="1"/>
</dbReference>
<dbReference type="SMART" id="SM00382">
    <property type="entry name" value="AAA"/>
    <property type="match status" value="1"/>
</dbReference>
<dbReference type="SMART" id="SM00962">
    <property type="entry name" value="SRP54"/>
    <property type="match status" value="1"/>
</dbReference>
<dbReference type="SMART" id="SM00963">
    <property type="entry name" value="SRP54_N"/>
    <property type="match status" value="1"/>
</dbReference>
<dbReference type="SUPFAM" id="SSF47364">
    <property type="entry name" value="Domain of the SRP/SRP receptor G-proteins"/>
    <property type="match status" value="1"/>
</dbReference>
<dbReference type="SUPFAM" id="SSF52540">
    <property type="entry name" value="P-loop containing nucleoside triphosphate hydrolases"/>
    <property type="match status" value="1"/>
</dbReference>
<dbReference type="SUPFAM" id="SSF47446">
    <property type="entry name" value="Signal peptide-binding domain"/>
    <property type="match status" value="1"/>
</dbReference>
<dbReference type="PROSITE" id="PS00300">
    <property type="entry name" value="SRP54"/>
    <property type="match status" value="1"/>
</dbReference>
<comment type="function">
    <text evidence="1">Involved in targeting and insertion of nascent membrane proteins into the cytoplasmic membrane. Binds to the hydrophobic signal sequence of the ribosome-nascent chain (RNC) as it emerges from the ribosomes. The SRP-RNC complex is then targeted to the cytoplasmic membrane where it interacts with the SRP receptor FtsY.</text>
</comment>
<comment type="catalytic activity">
    <reaction evidence="1">
        <text>GTP + H2O = GDP + phosphate + H(+)</text>
        <dbReference type="Rhea" id="RHEA:19669"/>
        <dbReference type="ChEBI" id="CHEBI:15377"/>
        <dbReference type="ChEBI" id="CHEBI:15378"/>
        <dbReference type="ChEBI" id="CHEBI:37565"/>
        <dbReference type="ChEBI" id="CHEBI:43474"/>
        <dbReference type="ChEBI" id="CHEBI:58189"/>
        <dbReference type="EC" id="3.6.5.4"/>
    </reaction>
</comment>
<comment type="subunit">
    <text evidence="1">Part of the signal recognition particle protein translocation system, which is composed of SRP and FtsY.</text>
</comment>
<comment type="interaction">
    <interactant intactId="EBI-1037906">
        <id>O07347</id>
    </interactant>
    <interactant intactId="EBI-1037899">
        <id>P83749</id>
        <label>ftsY</label>
    </interactant>
    <organismsDiffer>false</organismsDiffer>
    <experiments>3</experiments>
</comment>
<comment type="subcellular location">
    <subcellularLocation>
        <location evidence="1">Cytoplasm</location>
    </subcellularLocation>
    <text evidence="1">The SRP-RNC complex is targeted to the cytoplasmic membrane.</text>
</comment>
<comment type="domain">
    <text evidence="1 2 3 4">Composed of three domains: the N-terminal N domain, which is responsible for interactions with the ribosome, the central G domain, which binds GTP, and the C-terminal M domain, which binds the RNA and the signal sequence of the RNC.</text>
</comment>
<comment type="similarity">
    <text evidence="1">Belongs to the GTP-binding SRP family. SRP54 subfamily.</text>
</comment>
<gene>
    <name evidence="1" type="primary">ffh</name>
</gene>
<keyword id="KW-0002">3D-structure</keyword>
<keyword id="KW-0963">Cytoplasm</keyword>
<keyword id="KW-0342">GTP-binding</keyword>
<keyword id="KW-0378">Hydrolase</keyword>
<keyword id="KW-0547">Nucleotide-binding</keyword>
<keyword id="KW-0687">Ribonucleoprotein</keyword>
<keyword id="KW-0694">RNA-binding</keyword>
<keyword id="KW-0733">Signal recognition particle</keyword>
<accession>O07347</accession>
<feature type="initiator methionine" description="Removed">
    <location>
        <position position="1"/>
    </location>
</feature>
<feature type="chain" id="PRO_0000101170" description="Signal recognition particle protein">
    <location>
        <begin position="2"/>
        <end position="430"/>
    </location>
</feature>
<feature type="binding site" evidence="1">
    <location>
        <begin position="105"/>
        <end position="112"/>
    </location>
    <ligand>
        <name>GTP</name>
        <dbReference type="ChEBI" id="CHEBI:37565"/>
    </ligand>
</feature>
<feature type="binding site" evidence="1">
    <location>
        <begin position="187"/>
        <end position="191"/>
    </location>
    <ligand>
        <name>GTP</name>
        <dbReference type="ChEBI" id="CHEBI:37565"/>
    </ligand>
</feature>
<feature type="binding site" evidence="1">
    <location>
        <begin position="245"/>
        <end position="248"/>
    </location>
    <ligand>
        <name>GTP</name>
        <dbReference type="ChEBI" id="CHEBI:37565"/>
    </ligand>
</feature>
<feature type="helix" evidence="6">
    <location>
        <begin position="3"/>
        <end position="14"/>
    </location>
</feature>
<feature type="turn" evidence="6">
    <location>
        <begin position="15"/>
        <end position="18"/>
    </location>
</feature>
<feature type="strand" evidence="5">
    <location>
        <begin position="19"/>
        <end position="21"/>
    </location>
</feature>
<feature type="helix" evidence="6">
    <location>
        <begin position="24"/>
        <end position="40"/>
    </location>
</feature>
<feature type="helix" evidence="6">
    <location>
        <begin position="45"/>
        <end position="61"/>
    </location>
</feature>
<feature type="turn" evidence="6">
    <location>
        <begin position="62"/>
        <end position="66"/>
    </location>
</feature>
<feature type="helix" evidence="6">
    <location>
        <begin position="70"/>
        <end position="85"/>
    </location>
</feature>
<feature type="strand" evidence="6">
    <location>
        <begin position="97"/>
        <end position="104"/>
    </location>
</feature>
<feature type="turn" evidence="6">
    <location>
        <begin position="107"/>
        <end position="110"/>
    </location>
</feature>
<feature type="helix" evidence="6">
    <location>
        <begin position="111"/>
        <end position="124"/>
    </location>
</feature>
<feature type="strand" evidence="6">
    <location>
        <begin position="129"/>
        <end position="133"/>
    </location>
</feature>
<feature type="helix" evidence="6">
    <location>
        <begin position="139"/>
        <end position="152"/>
    </location>
</feature>
<feature type="strand" evidence="6">
    <location>
        <begin position="156"/>
        <end position="158"/>
    </location>
</feature>
<feature type="helix" evidence="6">
    <location>
        <begin position="165"/>
        <end position="179"/>
    </location>
</feature>
<feature type="strand" evidence="6">
    <location>
        <begin position="183"/>
        <end position="187"/>
    </location>
</feature>
<feature type="helix" evidence="6">
    <location>
        <begin position="196"/>
        <end position="209"/>
    </location>
</feature>
<feature type="strand" evidence="6">
    <location>
        <begin position="212"/>
        <end position="219"/>
    </location>
</feature>
<feature type="helix" evidence="6">
    <location>
        <begin position="220"/>
        <end position="223"/>
    </location>
</feature>
<feature type="helix" evidence="6">
    <location>
        <begin position="224"/>
        <end position="236"/>
    </location>
</feature>
<feature type="strand" evidence="6">
    <location>
        <begin position="241"/>
        <end position="245"/>
    </location>
</feature>
<feature type="helix" evidence="6">
    <location>
        <begin position="247"/>
        <end position="249"/>
    </location>
</feature>
<feature type="helix" evidence="6">
    <location>
        <begin position="254"/>
        <end position="263"/>
    </location>
</feature>
<feature type="strand" evidence="6">
    <location>
        <begin position="267"/>
        <end position="270"/>
    </location>
</feature>
<feature type="strand" evidence="8">
    <location>
        <begin position="273"/>
        <end position="275"/>
    </location>
</feature>
<feature type="helix" evidence="8">
    <location>
        <begin position="276"/>
        <end position="278"/>
    </location>
</feature>
<feature type="strand" evidence="8">
    <location>
        <begin position="279"/>
        <end position="281"/>
    </location>
</feature>
<feature type="helix" evidence="6">
    <location>
        <begin position="284"/>
        <end position="291"/>
    </location>
</feature>
<feature type="helix" evidence="7">
    <location>
        <begin position="300"/>
        <end position="306"/>
    </location>
</feature>
<feature type="helix" evidence="7">
    <location>
        <begin position="322"/>
        <end position="334"/>
    </location>
</feature>
<feature type="helix" evidence="7">
    <location>
        <begin position="341"/>
        <end position="343"/>
    </location>
</feature>
<feature type="helix" evidence="7">
    <location>
        <begin position="356"/>
        <end position="367"/>
    </location>
</feature>
<feature type="helix" evidence="7">
    <location>
        <begin position="371"/>
        <end position="375"/>
    </location>
</feature>
<feature type="helix" evidence="7">
    <location>
        <begin position="377"/>
        <end position="379"/>
    </location>
</feature>
<feature type="helix" evidence="7">
    <location>
        <begin position="382"/>
        <end position="392"/>
    </location>
</feature>
<feature type="helix" evidence="7">
    <location>
        <begin position="396"/>
        <end position="415"/>
    </location>
</feature>
<evidence type="ECO:0000255" key="1">
    <source>
        <dbReference type="HAMAP-Rule" id="MF_00306"/>
    </source>
</evidence>
<evidence type="ECO:0000269" key="2">
    <source>
    </source>
</evidence>
<evidence type="ECO:0000269" key="3">
    <source>
    </source>
</evidence>
<evidence type="ECO:0000269" key="4">
    <source>
    </source>
</evidence>
<evidence type="ECO:0007829" key="5">
    <source>
        <dbReference type="PDB" id="1FFH"/>
    </source>
</evidence>
<evidence type="ECO:0007829" key="6">
    <source>
        <dbReference type="PDB" id="1LS1"/>
    </source>
</evidence>
<evidence type="ECO:0007829" key="7">
    <source>
        <dbReference type="PDB" id="2FFH"/>
    </source>
</evidence>
<evidence type="ECO:0007829" key="8">
    <source>
        <dbReference type="PDB" id="2J45"/>
    </source>
</evidence>
<name>SRP54_THEAQ</name>